<gene>
    <name evidence="1" type="primary">rpsQ</name>
    <name type="ordered locus">ECIAI1_3460</name>
</gene>
<proteinExistence type="inferred from homology"/>
<keyword id="KW-0687">Ribonucleoprotein</keyword>
<keyword id="KW-0689">Ribosomal protein</keyword>
<keyword id="KW-0694">RNA-binding</keyword>
<keyword id="KW-0699">rRNA-binding</keyword>
<organism>
    <name type="scientific">Escherichia coli O8 (strain IAI1)</name>
    <dbReference type="NCBI Taxonomy" id="585034"/>
    <lineage>
        <taxon>Bacteria</taxon>
        <taxon>Pseudomonadati</taxon>
        <taxon>Pseudomonadota</taxon>
        <taxon>Gammaproteobacteria</taxon>
        <taxon>Enterobacterales</taxon>
        <taxon>Enterobacteriaceae</taxon>
        <taxon>Escherichia</taxon>
    </lineage>
</organism>
<reference key="1">
    <citation type="journal article" date="2009" name="PLoS Genet.">
        <title>Organised genome dynamics in the Escherichia coli species results in highly diverse adaptive paths.</title>
        <authorList>
            <person name="Touchon M."/>
            <person name="Hoede C."/>
            <person name="Tenaillon O."/>
            <person name="Barbe V."/>
            <person name="Baeriswyl S."/>
            <person name="Bidet P."/>
            <person name="Bingen E."/>
            <person name="Bonacorsi S."/>
            <person name="Bouchier C."/>
            <person name="Bouvet O."/>
            <person name="Calteau A."/>
            <person name="Chiapello H."/>
            <person name="Clermont O."/>
            <person name="Cruveiller S."/>
            <person name="Danchin A."/>
            <person name="Diard M."/>
            <person name="Dossat C."/>
            <person name="Karoui M.E."/>
            <person name="Frapy E."/>
            <person name="Garry L."/>
            <person name="Ghigo J.M."/>
            <person name="Gilles A.M."/>
            <person name="Johnson J."/>
            <person name="Le Bouguenec C."/>
            <person name="Lescat M."/>
            <person name="Mangenot S."/>
            <person name="Martinez-Jehanne V."/>
            <person name="Matic I."/>
            <person name="Nassif X."/>
            <person name="Oztas S."/>
            <person name="Petit M.A."/>
            <person name="Pichon C."/>
            <person name="Rouy Z."/>
            <person name="Ruf C.S."/>
            <person name="Schneider D."/>
            <person name="Tourret J."/>
            <person name="Vacherie B."/>
            <person name="Vallenet D."/>
            <person name="Medigue C."/>
            <person name="Rocha E.P.C."/>
            <person name="Denamur E."/>
        </authorList>
    </citation>
    <scope>NUCLEOTIDE SEQUENCE [LARGE SCALE GENOMIC DNA]</scope>
    <source>
        <strain>IAI1</strain>
    </source>
</reference>
<name>RS17_ECO8A</name>
<protein>
    <recommendedName>
        <fullName evidence="1">Small ribosomal subunit protein uS17</fullName>
    </recommendedName>
    <alternativeName>
        <fullName evidence="2">30S ribosomal protein S17</fullName>
    </alternativeName>
</protein>
<feature type="chain" id="PRO_1000143252" description="Small ribosomal subunit protein uS17">
    <location>
        <begin position="1"/>
        <end position="84"/>
    </location>
</feature>
<sequence length="84" mass="9704">MTDKIRTLQGRVVSDKMEKSIVVAIERFVKHPIYGKFIKRTTKLHVHDENNECGIGDVVEIRECRPLSKTKSWTLVRVVEKAVL</sequence>
<accession>B7M1M5</accession>
<comment type="function">
    <text evidence="1">One of the primary rRNA binding proteins, it binds specifically to the 5'-end of 16S ribosomal RNA.</text>
</comment>
<comment type="subunit">
    <text evidence="1">Part of the 30S ribosomal subunit.</text>
</comment>
<comment type="similarity">
    <text evidence="1">Belongs to the universal ribosomal protein uS17 family.</text>
</comment>
<dbReference type="EMBL" id="CU928160">
    <property type="protein sequence ID" value="CAR00262.1"/>
    <property type="molecule type" value="Genomic_DNA"/>
</dbReference>
<dbReference type="RefSeq" id="WP_000130100.1">
    <property type="nucleotide sequence ID" value="NC_011741.1"/>
</dbReference>
<dbReference type="SMR" id="B7M1M5"/>
<dbReference type="GeneID" id="93778676"/>
<dbReference type="KEGG" id="ecr:ECIAI1_3460"/>
<dbReference type="HOGENOM" id="CLU_073626_1_1_6"/>
<dbReference type="GO" id="GO:0022627">
    <property type="term" value="C:cytosolic small ribosomal subunit"/>
    <property type="evidence" value="ECO:0007669"/>
    <property type="project" value="TreeGrafter"/>
</dbReference>
<dbReference type="GO" id="GO:0019843">
    <property type="term" value="F:rRNA binding"/>
    <property type="evidence" value="ECO:0007669"/>
    <property type="project" value="UniProtKB-UniRule"/>
</dbReference>
<dbReference type="GO" id="GO:0003735">
    <property type="term" value="F:structural constituent of ribosome"/>
    <property type="evidence" value="ECO:0007669"/>
    <property type="project" value="InterPro"/>
</dbReference>
<dbReference type="GO" id="GO:0006412">
    <property type="term" value="P:translation"/>
    <property type="evidence" value="ECO:0007669"/>
    <property type="project" value="UniProtKB-UniRule"/>
</dbReference>
<dbReference type="CDD" id="cd00364">
    <property type="entry name" value="Ribosomal_uS17"/>
    <property type="match status" value="1"/>
</dbReference>
<dbReference type="FunFam" id="2.40.50.140:FF:000014">
    <property type="entry name" value="30S ribosomal protein S17"/>
    <property type="match status" value="1"/>
</dbReference>
<dbReference type="Gene3D" id="2.40.50.140">
    <property type="entry name" value="Nucleic acid-binding proteins"/>
    <property type="match status" value="1"/>
</dbReference>
<dbReference type="HAMAP" id="MF_01345_B">
    <property type="entry name" value="Ribosomal_uS17_B"/>
    <property type="match status" value="1"/>
</dbReference>
<dbReference type="InterPro" id="IPR012340">
    <property type="entry name" value="NA-bd_OB-fold"/>
</dbReference>
<dbReference type="InterPro" id="IPR000266">
    <property type="entry name" value="Ribosomal_uS17"/>
</dbReference>
<dbReference type="InterPro" id="IPR019984">
    <property type="entry name" value="Ribosomal_uS17_bact/chlr"/>
</dbReference>
<dbReference type="InterPro" id="IPR019979">
    <property type="entry name" value="Ribosomal_uS17_CS"/>
</dbReference>
<dbReference type="NCBIfam" id="NF004123">
    <property type="entry name" value="PRK05610.1"/>
    <property type="match status" value="1"/>
</dbReference>
<dbReference type="NCBIfam" id="TIGR03635">
    <property type="entry name" value="uS17_bact"/>
    <property type="match status" value="1"/>
</dbReference>
<dbReference type="PANTHER" id="PTHR10744">
    <property type="entry name" value="40S RIBOSOMAL PROTEIN S11 FAMILY MEMBER"/>
    <property type="match status" value="1"/>
</dbReference>
<dbReference type="PANTHER" id="PTHR10744:SF1">
    <property type="entry name" value="SMALL RIBOSOMAL SUBUNIT PROTEIN US17M"/>
    <property type="match status" value="1"/>
</dbReference>
<dbReference type="Pfam" id="PF00366">
    <property type="entry name" value="Ribosomal_S17"/>
    <property type="match status" value="1"/>
</dbReference>
<dbReference type="PRINTS" id="PR00973">
    <property type="entry name" value="RIBOSOMALS17"/>
</dbReference>
<dbReference type="SUPFAM" id="SSF50249">
    <property type="entry name" value="Nucleic acid-binding proteins"/>
    <property type="match status" value="1"/>
</dbReference>
<dbReference type="PROSITE" id="PS00056">
    <property type="entry name" value="RIBOSOMAL_S17"/>
    <property type="match status" value="1"/>
</dbReference>
<evidence type="ECO:0000255" key="1">
    <source>
        <dbReference type="HAMAP-Rule" id="MF_01345"/>
    </source>
</evidence>
<evidence type="ECO:0000305" key="2"/>